<accession>A1A4I4</accession>
<evidence type="ECO:0000250" key="1"/>
<evidence type="ECO:0000250" key="2">
    <source>
        <dbReference type="UniProtKB" id="P70268"/>
    </source>
</evidence>
<evidence type="ECO:0000250" key="3">
    <source>
        <dbReference type="UniProtKB" id="Q16512"/>
    </source>
</evidence>
<evidence type="ECO:0000250" key="4">
    <source>
        <dbReference type="UniProtKB" id="Q63433"/>
    </source>
</evidence>
<evidence type="ECO:0000255" key="5">
    <source>
        <dbReference type="PROSITE-ProRule" id="PRU00041"/>
    </source>
</evidence>
<evidence type="ECO:0000255" key="6">
    <source>
        <dbReference type="PROSITE-ProRule" id="PRU00159"/>
    </source>
</evidence>
<evidence type="ECO:0000255" key="7">
    <source>
        <dbReference type="PROSITE-ProRule" id="PRU00618"/>
    </source>
</evidence>
<evidence type="ECO:0000255" key="8">
    <source>
        <dbReference type="PROSITE-ProRule" id="PRU01207"/>
    </source>
</evidence>
<evidence type="ECO:0000255" key="9">
    <source>
        <dbReference type="PROSITE-ProRule" id="PRU10027"/>
    </source>
</evidence>
<evidence type="ECO:0000256" key="10">
    <source>
        <dbReference type="SAM" id="MobiDB-lite"/>
    </source>
</evidence>
<evidence type="ECO:0000305" key="11"/>
<reference key="1">
    <citation type="submission" date="2006-10" db="EMBL/GenBank/DDBJ databases">
        <authorList>
            <consortium name="NIH - Mammalian Gene Collection (MGC) project"/>
        </authorList>
    </citation>
    <scope>NUCLEOTIDE SEQUENCE [LARGE SCALE MRNA]</scope>
    <source>
        <strain>Hereford</strain>
        <tissue>Fetal brain</tissue>
    </source>
</reference>
<sequence length="944" mass="104133">MASDAVQSEPRSWSLLEQLGLAGADLAAPGVQQQLELERERLRREIRKELKLKEGAENLRRATTDLGRNLGPVELVLRGSSRRLALLHQQLQELHAHVVLPDPAVGVHDAPQSPGTGDSACSATNLSRVAGLEKQLAIELKVKQGAENMIQTYSNGSTKDRKLLLTAQQMLQDSKTKIDIIRMQLHRALQACQLESQAAPDEAQGSPDLGAVELRIEELRHHFRVEHAVAEGAKNVLRLLSAAKAPDRKAVSEAQEKLTESNQKLGLLREALERRLGELPADHPKGRLLREELAAASSAAFSARLAGPFPATHYSTLSKPAPLTGTLEVRVVGCRDLPETIPWNPSPSVGGPGTPDSRTPFLSRPARGLYSRTGSLSGRSSLKAEAENTNEVSTVLKLDNTVVGQTSWKPCGPNAWDQSFTLELERARELELAVFWRDQRGLCALKFLKLEDFLDNERHEVQLDMEPQGCLVAEVTFRNPVIERIPRLRRQKKIFSKQQGKAFQRARQMNIDVATWVRLLRRLIPNATATGTFSPGASPGPEARSTGDISVEKLNLGTETDSSPQKSPLGPPSSPSSLSSPIQATTTTPELPSETQETPGPTLCSPLRKSPLTLEDFKFLAVLGRGHFGKVLLSEFRPSGELFAIKALKKGDIVARDEVESLMCEKRILAAVTNAGHPFLVNLFGCFQTPEHVCFVMEYSAGGDLMLHIHSDVFSEPRAVFYSACVVLGLQFLHEHKIVYRDLKLDNLLLDTEGYVKIADFGLCKEGMGYGDRTSTFCGTPEFLAPEVLTDTSYTRAVDWWGLGVLLYEMLVGESPFPGDDEEEVFDSIVNDEVRYPRFLSAEAIGIMRRLLRRNPERRLGSSERDAEDVKKQPFFRTLGWDALLARRLPPPFVPTLAGRTDVSNFDEEFTGEAPTLSPPRDARPLTATEQAAFRDFDFVAGSC</sequence>
<comment type="function">
    <text evidence="3">PKC-related serine/threonine-protein kinase involved in various processes such as regulation of the intermediate filaments of the actin cytoskeleton, cell migration, tumor cell invasion and transcription regulation. Part of a signaling cascade that begins with the activation of the adrenergic receptor ADRA1B and leads to the activation of MAPK14. Regulates the cytoskeletal network by phosphorylating proteins such as VIM and neurofilament proteins NEFH, NEFL and NEFM, leading to inhibit their polymerization. Phosphorylates 'Ser-575', 'Ser-637' and 'Ser-669' of MAPT/Tau, lowering its ability to bind to microtubules, resulting in disruption of tubulin assembly. Acts as a key coactivator of androgen receptor (ANDR)-dependent transcription, by being recruited to ANDR target genes and specifically mediating phosphorylation of 'Thr-11' of histone H3 (H3T11ph), a specific tag for epigenetic transcriptional activation that promotes demethylation of histone H3 'Lys-9' (H3K9me) by KDM4C/JMJD2C. Phosphorylates HDAC5, HDAC7 and HDAC9, leading to impair their import in the nucleus. Phosphorylates 'Thr-38' of PPP1R14A, 'Ser-159', 'Ser-163' and 'Ser-170' of MARCKS, and GFAP. Able to phosphorylate RPS6 in vitro.</text>
</comment>
<comment type="catalytic activity">
    <reaction evidence="3">
        <text>L-seryl-[protein] + ATP = O-phospho-L-seryl-[protein] + ADP + H(+)</text>
        <dbReference type="Rhea" id="RHEA:17989"/>
        <dbReference type="Rhea" id="RHEA-COMP:9863"/>
        <dbReference type="Rhea" id="RHEA-COMP:11604"/>
        <dbReference type="ChEBI" id="CHEBI:15378"/>
        <dbReference type="ChEBI" id="CHEBI:29999"/>
        <dbReference type="ChEBI" id="CHEBI:30616"/>
        <dbReference type="ChEBI" id="CHEBI:83421"/>
        <dbReference type="ChEBI" id="CHEBI:456216"/>
        <dbReference type="EC" id="2.7.11.13"/>
    </reaction>
</comment>
<comment type="catalytic activity">
    <reaction evidence="3">
        <text>L-threonyl-[protein] + ATP = O-phospho-L-threonyl-[protein] + ADP + H(+)</text>
        <dbReference type="Rhea" id="RHEA:46608"/>
        <dbReference type="Rhea" id="RHEA-COMP:11060"/>
        <dbReference type="Rhea" id="RHEA-COMP:11605"/>
        <dbReference type="ChEBI" id="CHEBI:15378"/>
        <dbReference type="ChEBI" id="CHEBI:30013"/>
        <dbReference type="ChEBI" id="CHEBI:30616"/>
        <dbReference type="ChEBI" id="CHEBI:61977"/>
        <dbReference type="ChEBI" id="CHEBI:456216"/>
        <dbReference type="EC" id="2.7.11.13"/>
    </reaction>
</comment>
<comment type="activity regulation">
    <text evidence="1">Kinase activity is activated upon binding to Rho proteins (RHOA, RHOB and RAC1). Activated by lipids, particularly cardiolipin and to a lesser extent by other acidic phospholipids. Activated by caspase-3 (CASP3) cleavage during apoptosis. Two specific sites, Thr-776 (activation loop of the kinase domain) and Ser-918 (turn motif), need to be phosphorylated for its full activation (By similarity).</text>
</comment>
<comment type="subunit">
    <text evidence="2 3">Interacts with ZFAND6 (By similarity). Interacts with ANDR. Interacts with PRKCB. Interacts (via REM 1 and REM 2 repeats) with RAC1. Interacts (via REM 1 repeat) with RHOA. Interacts with RHOB. Interacts (via C-terminus) with PDPK1. Interacts with CCNT2; enhances MYOD1-dependent transcription. Component of a signaling complex containing at least AKAP13, PKN1, MAPK14, ZAK and MAP2K3. Within this complex, AKAP13 interacts directly with PKN1, which in turn recruits MAPK14, MAP2K3 and ZAK (By similarity).</text>
</comment>
<comment type="subcellular location">
    <subcellularLocation>
        <location evidence="3">Cytoplasm</location>
    </subcellularLocation>
    <subcellularLocation>
        <location evidence="3">Nucleus</location>
    </subcellularLocation>
    <subcellularLocation>
        <location evidence="3">Endosome</location>
    </subcellularLocation>
    <subcellularLocation>
        <location evidence="4">Cell membrane</location>
        <topology evidence="4">Peripheral membrane protein</topology>
    </subcellularLocation>
    <subcellularLocation>
        <location evidence="3">Cleavage furrow</location>
    </subcellularLocation>
    <subcellularLocation>
        <location evidence="3">Midbody</location>
    </subcellularLocation>
    <text evidence="3 4">Associates with chromatin in a ligand-dependent manner. Localization to endosomes is mediated via its interaction with RHOB. Association to the cell membrane is dependent on Ser-377 phosphorylation. Accumulates during telophase at the cleavage furrow and finally concentrates around the midbody in cytokinesis.</text>
</comment>
<comment type="domain">
    <text evidence="1">The C1 domain does not bind the diacylglycerol (DAG).</text>
</comment>
<comment type="PTM">
    <text evidence="3">Autophosphorylated; preferably on serine. Phosphorylated during mitosis.</text>
</comment>
<comment type="PTM">
    <text evidence="1">Activated by limited proteolysis with trypsin.</text>
</comment>
<comment type="similarity">
    <text evidence="11">Belongs to the protein kinase superfamily. AGC Ser/Thr protein kinase family. PKC subfamily.</text>
</comment>
<dbReference type="EC" id="2.7.11.13" evidence="3"/>
<dbReference type="EMBL" id="BC126539">
    <property type="protein sequence ID" value="AAI26540.1"/>
    <property type="molecule type" value="mRNA"/>
</dbReference>
<dbReference type="RefSeq" id="NP_001073715.1">
    <property type="nucleotide sequence ID" value="NM_001080246.1"/>
</dbReference>
<dbReference type="SMR" id="A1A4I4"/>
<dbReference type="FunCoup" id="A1A4I4">
    <property type="interactions" value="2407"/>
</dbReference>
<dbReference type="STRING" id="9913.ENSBTAP00000022652"/>
<dbReference type="PaxDb" id="9913-ENSBTAP00000022652"/>
<dbReference type="GeneID" id="509080"/>
<dbReference type="KEGG" id="bta:509080"/>
<dbReference type="CTD" id="5585"/>
<dbReference type="VEuPathDB" id="HostDB:ENSBTAG00000017037"/>
<dbReference type="eggNOG" id="KOG0694">
    <property type="taxonomic scope" value="Eukaryota"/>
</dbReference>
<dbReference type="HOGENOM" id="CLU_000288_132_1_1"/>
<dbReference type="InParanoid" id="A1A4I4"/>
<dbReference type="OrthoDB" id="63267at2759"/>
<dbReference type="Reactome" id="R-BTA-5625740">
    <property type="pathway name" value="RHO GTPases activate PKNs"/>
</dbReference>
<dbReference type="Reactome" id="R-BTA-5625886">
    <property type="pathway name" value="Activated PKN1 stimulates transcription of AR (androgen receptor) regulated genes KLK2 and KLK3"/>
</dbReference>
<dbReference type="Reactome" id="R-BTA-8980692">
    <property type="pathway name" value="RHOA GTPase cycle"/>
</dbReference>
<dbReference type="Reactome" id="R-BTA-9013106">
    <property type="pathway name" value="RHOC GTPase cycle"/>
</dbReference>
<dbReference type="Reactome" id="R-BTA-9013149">
    <property type="pathway name" value="RAC1 GTPase cycle"/>
</dbReference>
<dbReference type="Proteomes" id="UP000009136">
    <property type="component" value="Chromosome 7"/>
</dbReference>
<dbReference type="Bgee" id="ENSBTAG00000017037">
    <property type="expression patterns" value="Expressed in mesenteric lymph node and 106 other cell types or tissues"/>
</dbReference>
<dbReference type="GO" id="GO:0032154">
    <property type="term" value="C:cleavage furrow"/>
    <property type="evidence" value="ECO:0000250"/>
    <property type="project" value="UniProtKB"/>
</dbReference>
<dbReference type="GO" id="GO:0005737">
    <property type="term" value="C:cytoplasm"/>
    <property type="evidence" value="ECO:0000250"/>
    <property type="project" value="UniProtKB"/>
</dbReference>
<dbReference type="GO" id="GO:0005768">
    <property type="term" value="C:endosome"/>
    <property type="evidence" value="ECO:0000250"/>
    <property type="project" value="UniProtKB"/>
</dbReference>
<dbReference type="GO" id="GO:0030496">
    <property type="term" value="C:midbody"/>
    <property type="evidence" value="ECO:0000250"/>
    <property type="project" value="UniProtKB"/>
</dbReference>
<dbReference type="GO" id="GO:0005634">
    <property type="term" value="C:nucleus"/>
    <property type="evidence" value="ECO:0000250"/>
    <property type="project" value="UniProtKB"/>
</dbReference>
<dbReference type="GO" id="GO:0005524">
    <property type="term" value="F:ATP binding"/>
    <property type="evidence" value="ECO:0007669"/>
    <property type="project" value="UniProtKB-KW"/>
</dbReference>
<dbReference type="GO" id="GO:0003682">
    <property type="term" value="F:chromatin binding"/>
    <property type="evidence" value="ECO:0000250"/>
    <property type="project" value="UniProtKB"/>
</dbReference>
<dbReference type="GO" id="GO:0004697">
    <property type="term" value="F:diacylglycerol-dependent serine/threonine kinase activity"/>
    <property type="evidence" value="ECO:0007669"/>
    <property type="project" value="UniProtKB-EC"/>
</dbReference>
<dbReference type="GO" id="GO:0042393">
    <property type="term" value="F:histone binding"/>
    <property type="evidence" value="ECO:0000250"/>
    <property type="project" value="UniProtKB"/>
</dbReference>
<dbReference type="GO" id="GO:0042826">
    <property type="term" value="F:histone deacetylase binding"/>
    <property type="evidence" value="ECO:0000250"/>
    <property type="project" value="UniProtKB"/>
</dbReference>
<dbReference type="GO" id="GO:0035402">
    <property type="term" value="F:histone H3T11 kinase activity"/>
    <property type="evidence" value="ECO:0000250"/>
    <property type="project" value="UniProtKB"/>
</dbReference>
<dbReference type="GO" id="GO:0050681">
    <property type="term" value="F:nuclear androgen receptor binding"/>
    <property type="evidence" value="ECO:0000250"/>
    <property type="project" value="UniProtKB"/>
</dbReference>
<dbReference type="GO" id="GO:0106310">
    <property type="term" value="F:protein serine kinase activity"/>
    <property type="evidence" value="ECO:0007669"/>
    <property type="project" value="RHEA"/>
</dbReference>
<dbReference type="GO" id="GO:0004674">
    <property type="term" value="F:protein serine/threonine kinase activity"/>
    <property type="evidence" value="ECO:0000250"/>
    <property type="project" value="UniProtKB"/>
</dbReference>
<dbReference type="GO" id="GO:0031267">
    <property type="term" value="F:small GTPase binding"/>
    <property type="evidence" value="ECO:0000250"/>
    <property type="project" value="UniProtKB"/>
</dbReference>
<dbReference type="GO" id="GO:0003713">
    <property type="term" value="F:transcription coactivator activity"/>
    <property type="evidence" value="ECO:0000250"/>
    <property type="project" value="UniProtKB"/>
</dbReference>
<dbReference type="GO" id="GO:0010631">
    <property type="term" value="P:epithelial cell migration"/>
    <property type="evidence" value="ECO:0000250"/>
    <property type="project" value="UniProtKB"/>
</dbReference>
<dbReference type="GO" id="GO:0035556">
    <property type="term" value="P:intracellular signal transduction"/>
    <property type="evidence" value="ECO:0000318"/>
    <property type="project" value="GO_Central"/>
</dbReference>
<dbReference type="GO" id="GO:0043687">
    <property type="term" value="P:post-translational protein modification"/>
    <property type="evidence" value="ECO:0000250"/>
    <property type="project" value="UniProtKB"/>
</dbReference>
<dbReference type="GO" id="GO:0006468">
    <property type="term" value="P:protein phosphorylation"/>
    <property type="evidence" value="ECO:0000250"/>
    <property type="project" value="UniProtKB"/>
</dbReference>
<dbReference type="GO" id="GO:2000145">
    <property type="term" value="P:regulation of cell motility"/>
    <property type="evidence" value="ECO:0000250"/>
    <property type="project" value="UniProtKB"/>
</dbReference>
<dbReference type="GO" id="GO:0006357">
    <property type="term" value="P:regulation of transcription by RNA polymerase II"/>
    <property type="evidence" value="ECO:0000250"/>
    <property type="project" value="UniProtKB"/>
</dbReference>
<dbReference type="CDD" id="cd08687">
    <property type="entry name" value="C2_PKN-like"/>
    <property type="match status" value="1"/>
</dbReference>
<dbReference type="CDD" id="cd11630">
    <property type="entry name" value="HR1_PKN1_2"/>
    <property type="match status" value="1"/>
</dbReference>
<dbReference type="CDD" id="cd11636">
    <property type="entry name" value="HR1_PKN1_3"/>
    <property type="match status" value="1"/>
</dbReference>
<dbReference type="CDD" id="cd11622">
    <property type="entry name" value="HR1_PKN_1"/>
    <property type="match status" value="1"/>
</dbReference>
<dbReference type="CDD" id="cd05589">
    <property type="entry name" value="STKc_PKN"/>
    <property type="match status" value="1"/>
</dbReference>
<dbReference type="FunFam" id="1.10.287.160:FF:000001">
    <property type="entry name" value="Putative serine/threonine-protein kinase N2"/>
    <property type="match status" value="1"/>
</dbReference>
<dbReference type="FunFam" id="1.10.287.160:FF:000002">
    <property type="entry name" value="Putative serine/threonine-protein kinase N2"/>
    <property type="match status" value="1"/>
</dbReference>
<dbReference type="FunFam" id="1.10.287.160:FF:000003">
    <property type="entry name" value="Putative serine/threonine-protein kinase N2"/>
    <property type="match status" value="1"/>
</dbReference>
<dbReference type="FunFam" id="3.30.200.20:FF:000058">
    <property type="entry name" value="Putative serine/threonine-protein kinase N2"/>
    <property type="match status" value="1"/>
</dbReference>
<dbReference type="FunFam" id="1.10.510.10:FF:000038">
    <property type="entry name" value="serine/threonine-protein kinase N2 isoform X1"/>
    <property type="match status" value="1"/>
</dbReference>
<dbReference type="Gene3D" id="1.10.287.160">
    <property type="entry name" value="HR1 repeat"/>
    <property type="match status" value="3"/>
</dbReference>
<dbReference type="Gene3D" id="3.30.200.20">
    <property type="entry name" value="Phosphorylase Kinase, domain 1"/>
    <property type="match status" value="1"/>
</dbReference>
<dbReference type="Gene3D" id="1.10.510.10">
    <property type="entry name" value="Transferase(Phosphotransferase) domain 1"/>
    <property type="match status" value="1"/>
</dbReference>
<dbReference type="InterPro" id="IPR000961">
    <property type="entry name" value="AGC-kinase_C"/>
</dbReference>
<dbReference type="InterPro" id="IPR000008">
    <property type="entry name" value="C2_dom"/>
</dbReference>
<dbReference type="InterPro" id="IPR035892">
    <property type="entry name" value="C2_domain_sf"/>
</dbReference>
<dbReference type="InterPro" id="IPR037784">
    <property type="entry name" value="C2_PKN"/>
</dbReference>
<dbReference type="InterPro" id="IPR011072">
    <property type="entry name" value="HR1_rho-bd"/>
</dbReference>
<dbReference type="InterPro" id="IPR036274">
    <property type="entry name" value="HR1_rpt_sf"/>
</dbReference>
<dbReference type="InterPro" id="IPR011009">
    <property type="entry name" value="Kinase-like_dom_sf"/>
</dbReference>
<dbReference type="InterPro" id="IPR017892">
    <property type="entry name" value="Pkinase_C"/>
</dbReference>
<dbReference type="InterPro" id="IPR037317">
    <property type="entry name" value="PKN1_HR1_2"/>
</dbReference>
<dbReference type="InterPro" id="IPR037313">
    <property type="entry name" value="PKN_HR1_1"/>
</dbReference>
<dbReference type="InterPro" id="IPR000719">
    <property type="entry name" value="Prot_kinase_dom"/>
</dbReference>
<dbReference type="InterPro" id="IPR017441">
    <property type="entry name" value="Protein_kinase_ATP_BS"/>
</dbReference>
<dbReference type="InterPro" id="IPR008271">
    <property type="entry name" value="Ser/Thr_kinase_AS"/>
</dbReference>
<dbReference type="PANTHER" id="PTHR24351">
    <property type="entry name" value="RIBOSOMAL PROTEIN S6 KINASE"/>
    <property type="match status" value="1"/>
</dbReference>
<dbReference type="Pfam" id="PF02185">
    <property type="entry name" value="HR1"/>
    <property type="match status" value="3"/>
</dbReference>
<dbReference type="Pfam" id="PF00069">
    <property type="entry name" value="Pkinase"/>
    <property type="match status" value="1"/>
</dbReference>
<dbReference type="Pfam" id="PF00433">
    <property type="entry name" value="Pkinase_C"/>
    <property type="match status" value="1"/>
</dbReference>
<dbReference type="SMART" id="SM00742">
    <property type="entry name" value="Hr1"/>
    <property type="match status" value="3"/>
</dbReference>
<dbReference type="SMART" id="SM00133">
    <property type="entry name" value="S_TK_X"/>
    <property type="match status" value="1"/>
</dbReference>
<dbReference type="SMART" id="SM00220">
    <property type="entry name" value="S_TKc"/>
    <property type="match status" value="1"/>
</dbReference>
<dbReference type="SUPFAM" id="SSF49562">
    <property type="entry name" value="C2 domain (Calcium/lipid-binding domain, CaLB)"/>
    <property type="match status" value="1"/>
</dbReference>
<dbReference type="SUPFAM" id="SSF46585">
    <property type="entry name" value="HR1 repeat"/>
    <property type="match status" value="3"/>
</dbReference>
<dbReference type="SUPFAM" id="SSF56112">
    <property type="entry name" value="Protein kinase-like (PK-like)"/>
    <property type="match status" value="1"/>
</dbReference>
<dbReference type="PROSITE" id="PS51285">
    <property type="entry name" value="AGC_KINASE_CTER"/>
    <property type="match status" value="1"/>
</dbReference>
<dbReference type="PROSITE" id="PS50004">
    <property type="entry name" value="C2"/>
    <property type="match status" value="1"/>
</dbReference>
<dbReference type="PROSITE" id="PS00107">
    <property type="entry name" value="PROTEIN_KINASE_ATP"/>
    <property type="match status" value="1"/>
</dbReference>
<dbReference type="PROSITE" id="PS50011">
    <property type="entry name" value="PROTEIN_KINASE_DOM"/>
    <property type="match status" value="1"/>
</dbReference>
<dbReference type="PROSITE" id="PS00108">
    <property type="entry name" value="PROTEIN_KINASE_ST"/>
    <property type="match status" value="1"/>
</dbReference>
<dbReference type="PROSITE" id="PS51860">
    <property type="entry name" value="REM_1"/>
    <property type="match status" value="3"/>
</dbReference>
<keyword id="KW-0007">Acetylation</keyword>
<keyword id="KW-0067">ATP-binding</keyword>
<keyword id="KW-1003">Cell membrane</keyword>
<keyword id="KW-0156">Chromatin regulator</keyword>
<keyword id="KW-0175">Coiled coil</keyword>
<keyword id="KW-0963">Cytoplasm</keyword>
<keyword id="KW-0967">Endosome</keyword>
<keyword id="KW-0418">Kinase</keyword>
<keyword id="KW-0472">Membrane</keyword>
<keyword id="KW-0547">Nucleotide-binding</keyword>
<keyword id="KW-0539">Nucleus</keyword>
<keyword id="KW-0597">Phosphoprotein</keyword>
<keyword id="KW-1185">Reference proteome</keyword>
<keyword id="KW-0677">Repeat</keyword>
<keyword id="KW-0723">Serine/threonine-protein kinase</keyword>
<keyword id="KW-0804">Transcription</keyword>
<keyword id="KW-0805">Transcription regulation</keyword>
<keyword id="KW-0808">Transferase</keyword>
<gene>
    <name type="primary">PKN1</name>
    <name type="synonym">PKN</name>
    <name type="synonym">PRK1</name>
    <name type="synonym">PRKCL1</name>
</gene>
<proteinExistence type="evidence at transcript level"/>
<name>PKN1_BOVIN</name>
<protein>
    <recommendedName>
        <fullName>Serine/threonine-protein kinase N1</fullName>
        <ecNumber evidence="3">2.7.11.13</ecNumber>
    </recommendedName>
    <alternativeName>
        <fullName>Protein kinase C-like 1</fullName>
    </alternativeName>
    <alternativeName>
        <fullName>Protein kinase C-like PKN</fullName>
    </alternativeName>
    <alternativeName>
        <fullName>Protein kinase PKN-alpha</fullName>
    </alternativeName>
    <alternativeName>
        <fullName>Protein-kinase C-related kinase 1</fullName>
    </alternativeName>
    <alternativeName>
        <fullName>Serine-threonine protein kinase N</fullName>
    </alternativeName>
</protein>
<feature type="initiator methionine" description="Removed" evidence="3">
    <location>
        <position position="1"/>
    </location>
</feature>
<feature type="chain" id="PRO_0000394261" description="Serine/threonine-protein kinase N1">
    <location>
        <begin position="2"/>
        <end position="944"/>
    </location>
</feature>
<feature type="domain" description="REM-1 1" evidence="8">
    <location>
        <begin position="25"/>
        <end position="100"/>
    </location>
</feature>
<feature type="domain" description="REM-1 2" evidence="8">
    <location>
        <begin position="113"/>
        <end position="194"/>
    </location>
</feature>
<feature type="domain" description="REM-1 3" evidence="8">
    <location>
        <begin position="200"/>
        <end position="281"/>
    </location>
</feature>
<feature type="domain" description="C2" evidence="5">
    <location>
        <begin position="308"/>
        <end position="471"/>
    </location>
</feature>
<feature type="domain" description="Protein kinase" evidence="6">
    <location>
        <begin position="617"/>
        <end position="876"/>
    </location>
</feature>
<feature type="domain" description="AGC-kinase C-terminal" evidence="7">
    <location>
        <begin position="877"/>
        <end position="944"/>
    </location>
</feature>
<feature type="region of interest" description="Disordered" evidence="10">
    <location>
        <begin position="528"/>
        <end position="547"/>
    </location>
</feature>
<feature type="region of interest" description="Disordered" evidence="10">
    <location>
        <begin position="558"/>
        <end position="607"/>
    </location>
</feature>
<feature type="compositionally biased region" description="Polar residues" evidence="10">
    <location>
        <begin position="582"/>
        <end position="599"/>
    </location>
</feature>
<feature type="active site" description="Proton acceptor" evidence="6 9">
    <location>
        <position position="742"/>
    </location>
</feature>
<feature type="binding site" evidence="6">
    <location>
        <begin position="623"/>
        <end position="631"/>
    </location>
    <ligand>
        <name>ATP</name>
        <dbReference type="ChEBI" id="CHEBI:30616"/>
    </ligand>
</feature>
<feature type="binding site" evidence="6">
    <location>
        <position position="646"/>
    </location>
    <ligand>
        <name>ATP</name>
        <dbReference type="ChEBI" id="CHEBI:30616"/>
    </ligand>
</feature>
<feature type="site" description="Cleavage; by caspase-3" evidence="1">
    <location>
        <begin position="109"/>
        <end position="110"/>
    </location>
</feature>
<feature type="site" description="Cleavage; by caspase-3" evidence="1">
    <location>
        <begin position="455"/>
        <end position="456"/>
    </location>
</feature>
<feature type="site" description="Cleavage; by caspase-3" evidence="1">
    <location>
        <begin position="559"/>
        <end position="560"/>
    </location>
</feature>
<feature type="modified residue" description="N-acetylalanine" evidence="3">
    <location>
        <position position="2"/>
    </location>
</feature>
<feature type="modified residue" description="Phosphoserine" evidence="3">
    <location>
        <position position="206"/>
    </location>
</feature>
<feature type="modified residue" description="Phosphoserine" evidence="4">
    <location>
        <position position="375"/>
    </location>
</feature>
<feature type="modified residue" description="N6-acetyllysine" evidence="3">
    <location>
        <position position="449"/>
    </location>
</feature>
<feature type="modified residue" description="Phosphoserine" evidence="3">
    <location>
        <position position="534"/>
    </location>
</feature>
<feature type="modified residue" description="Phosphoserine" evidence="3">
    <location>
        <position position="538"/>
    </location>
</feature>
<feature type="modified residue" description="Phosphoserine" evidence="3">
    <location>
        <position position="563"/>
    </location>
</feature>
<feature type="modified residue" description="Phosphoserine" evidence="3">
    <location>
        <position position="610"/>
    </location>
</feature>
<feature type="modified residue" description="Phosphothreonine; by PDPK1" evidence="3">
    <location>
        <position position="776"/>
    </location>
</feature>
<feature type="modified residue" description="Phosphothreonine" evidence="3">
    <location>
        <position position="780"/>
    </location>
</feature>
<feature type="modified residue" description="Phosphothreonine" evidence="3">
    <location>
        <position position="916"/>
    </location>
</feature>
<feature type="modified residue" description="Phosphoserine" evidence="3">
    <location>
        <position position="918"/>
    </location>
</feature>
<organism>
    <name type="scientific">Bos taurus</name>
    <name type="common">Bovine</name>
    <dbReference type="NCBI Taxonomy" id="9913"/>
    <lineage>
        <taxon>Eukaryota</taxon>
        <taxon>Metazoa</taxon>
        <taxon>Chordata</taxon>
        <taxon>Craniata</taxon>
        <taxon>Vertebrata</taxon>
        <taxon>Euteleostomi</taxon>
        <taxon>Mammalia</taxon>
        <taxon>Eutheria</taxon>
        <taxon>Laurasiatheria</taxon>
        <taxon>Artiodactyla</taxon>
        <taxon>Ruminantia</taxon>
        <taxon>Pecora</taxon>
        <taxon>Bovidae</taxon>
        <taxon>Bovinae</taxon>
        <taxon>Bos</taxon>
    </lineage>
</organism>